<comment type="function">
    <text evidence="4">Probable O-linked N-acetylglucosamine transferase (OGT) involved in various processes such as gibberellin (GA) signaling pathway. OGTs catalyze the addition of nucleotide-activated sugars directly onto the polypeptide through O-glycosidic linkage with the hydroxyl of serine or threonine. Probably acts by adding O-linked sugars to yet unknown proteins.</text>
</comment>
<comment type="catalytic activity">
    <reaction evidence="2">
        <text>L-seryl-[protein] + UDP-N-acetyl-alpha-D-glucosamine = 3-O-(N-acetyl-beta-D-glucosaminyl)-L-seryl-[protein] + UDP + H(+)</text>
        <dbReference type="Rhea" id="RHEA:48904"/>
        <dbReference type="Rhea" id="RHEA-COMP:9863"/>
        <dbReference type="Rhea" id="RHEA-COMP:12251"/>
        <dbReference type="ChEBI" id="CHEBI:15378"/>
        <dbReference type="ChEBI" id="CHEBI:29999"/>
        <dbReference type="ChEBI" id="CHEBI:57705"/>
        <dbReference type="ChEBI" id="CHEBI:58223"/>
        <dbReference type="ChEBI" id="CHEBI:90838"/>
        <dbReference type="EC" id="2.4.1.255"/>
    </reaction>
</comment>
<comment type="catalytic activity">
    <reaction evidence="2">
        <text>L-threonyl-[protein] + UDP-N-acetyl-alpha-D-glucosamine = 3-O-(N-acetyl-beta-D-glucosaminyl)-L-threonyl-[protein] + UDP + H(+)</text>
        <dbReference type="Rhea" id="RHEA:48908"/>
        <dbReference type="Rhea" id="RHEA-COMP:11060"/>
        <dbReference type="Rhea" id="RHEA-COMP:12252"/>
        <dbReference type="ChEBI" id="CHEBI:15378"/>
        <dbReference type="ChEBI" id="CHEBI:30013"/>
        <dbReference type="ChEBI" id="CHEBI:57705"/>
        <dbReference type="ChEBI" id="CHEBI:58223"/>
        <dbReference type="ChEBI" id="CHEBI:90840"/>
        <dbReference type="EC" id="2.4.1.255"/>
    </reaction>
</comment>
<comment type="pathway">
    <text>Protein modification; protein glycosylation.</text>
</comment>
<comment type="subcellular location">
    <subcellularLocation>
        <location evidence="1">Nucleus</location>
    </subcellularLocation>
</comment>
<comment type="tissue specificity">
    <text evidence="4">Expressed in stems, leaves and flowers. Expressed during all stages of corolla maturation.</text>
</comment>
<comment type="induction">
    <text>Not up-regulated by GA3 or ABA application.</text>
</comment>
<comment type="domain">
    <text evidence="4">The TPR repeats mediate protein-protein interactions. Expression of such repeats in plants generate a dominant-negative mutant.</text>
</comment>
<comment type="similarity">
    <text evidence="5">Belongs to the glycosyltransferase 41 family. O-GlcNAc transferase subfamily.</text>
</comment>
<feature type="chain" id="PRO_0000191781" description="Probable UDP-N-acetylglucosamine--peptide N-acetylglucosaminyltransferase SPINDLY">
    <location>
        <begin position="1"/>
        <end position="932"/>
    </location>
</feature>
<feature type="repeat" description="TPR 1">
    <location>
        <begin position="48"/>
        <end position="81"/>
    </location>
</feature>
<feature type="repeat" description="TPR 2">
    <location>
        <begin position="82"/>
        <end position="115"/>
    </location>
</feature>
<feature type="repeat" description="TPR 3">
    <location>
        <begin position="116"/>
        <end position="149"/>
    </location>
</feature>
<feature type="repeat" description="TPR 4">
    <location>
        <begin position="157"/>
        <end position="190"/>
    </location>
</feature>
<feature type="repeat" description="TPR 5">
    <location>
        <begin position="191"/>
        <end position="224"/>
    </location>
</feature>
<feature type="repeat" description="TPR 6">
    <location>
        <begin position="225"/>
        <end position="258"/>
    </location>
</feature>
<feature type="repeat" description="TPR 7">
    <location>
        <begin position="266"/>
        <end position="299"/>
    </location>
</feature>
<feature type="repeat" description="TPR 8">
    <location>
        <begin position="300"/>
        <end position="333"/>
    </location>
</feature>
<feature type="repeat" description="TPR 9">
    <location>
        <begin position="334"/>
        <end position="367"/>
    </location>
</feature>
<feature type="repeat" description="TPR 10">
    <location>
        <begin position="369"/>
        <end position="401"/>
    </location>
</feature>
<feature type="repeat" description="TPR 11">
    <location>
        <begin position="402"/>
        <end position="435"/>
    </location>
</feature>
<feature type="region of interest" description="Disordered" evidence="3">
    <location>
        <begin position="1"/>
        <end position="39"/>
    </location>
</feature>
<feature type="region of interest" description="Catalytic region">
    <location>
        <begin position="436"/>
        <end position="932"/>
    </location>
</feature>
<feature type="region of interest" description="Disordered" evidence="3">
    <location>
        <begin position="881"/>
        <end position="902"/>
    </location>
</feature>
<feature type="compositionally biased region" description="Basic and acidic residues" evidence="3">
    <location>
        <begin position="1"/>
        <end position="15"/>
    </location>
</feature>
<reference key="1">
    <citation type="journal article" date="2001" name="Plant J.">
        <title>The role of SPY and its TPR domain in the regulation of gibberellin action throughout the life cycle of Petunia hybrida plants.</title>
        <authorList>
            <person name="Izhaki A."/>
            <person name="Swain S.M."/>
            <person name="Tseng T.-S."/>
            <person name="Borochov A."/>
            <person name="Olszewski N.E."/>
            <person name="Weiss D."/>
        </authorList>
    </citation>
    <scope>NUCLEOTIDE SEQUENCE [MRNA]</scope>
    <scope>FUNCTION</scope>
    <scope>DOMAIN</scope>
    <scope>TISSUE SPECIFICITY</scope>
    <source>
        <tissue>Anther</tissue>
    </source>
</reference>
<accession>O82039</accession>
<dbReference type="EC" id="2.4.1.255" evidence="2"/>
<dbReference type="EMBL" id="Y17720">
    <property type="protein sequence ID" value="CAA76834.1"/>
    <property type="molecule type" value="mRNA"/>
</dbReference>
<dbReference type="SMR" id="O82039"/>
<dbReference type="CAZy" id="GT41">
    <property type="family name" value="Glycosyltransferase Family 41"/>
</dbReference>
<dbReference type="UniPathway" id="UPA00378"/>
<dbReference type="GO" id="GO:0005634">
    <property type="term" value="C:nucleus"/>
    <property type="evidence" value="ECO:0007669"/>
    <property type="project" value="UniProtKB-SubCell"/>
</dbReference>
<dbReference type="GO" id="GO:0097363">
    <property type="term" value="F:protein O-acetylglucosaminyltransferase activity"/>
    <property type="evidence" value="ECO:0007669"/>
    <property type="project" value="UniProtKB-EC"/>
</dbReference>
<dbReference type="GO" id="GO:0009740">
    <property type="term" value="P:gibberellic acid mediated signaling pathway"/>
    <property type="evidence" value="ECO:0007669"/>
    <property type="project" value="UniProtKB-KW"/>
</dbReference>
<dbReference type="GO" id="GO:0006486">
    <property type="term" value="P:protein glycosylation"/>
    <property type="evidence" value="ECO:0007669"/>
    <property type="project" value="UniProtKB-UniPathway"/>
</dbReference>
<dbReference type="FunFam" id="1.25.40.10:FF:001620">
    <property type="entry name" value="probable UDP-N-acetylglucosamine--peptide N-acetylglucosaminyltransferase SPINDLY"/>
    <property type="match status" value="1"/>
</dbReference>
<dbReference type="Gene3D" id="3.40.50.11380">
    <property type="match status" value="1"/>
</dbReference>
<dbReference type="Gene3D" id="3.40.50.2000">
    <property type="entry name" value="Glycogen Phosphorylase B"/>
    <property type="match status" value="1"/>
</dbReference>
<dbReference type="Gene3D" id="1.25.40.10">
    <property type="entry name" value="Tetratricopeptide repeat domain"/>
    <property type="match status" value="3"/>
</dbReference>
<dbReference type="InterPro" id="IPR051939">
    <property type="entry name" value="Glycosyltr_41/O-GlcNAc_trsf"/>
</dbReference>
<dbReference type="InterPro" id="IPR029489">
    <property type="entry name" value="OGT/SEC/SPY_C"/>
</dbReference>
<dbReference type="InterPro" id="IPR006597">
    <property type="entry name" value="Sel1-like"/>
</dbReference>
<dbReference type="InterPro" id="IPR011990">
    <property type="entry name" value="TPR-like_helical_dom_sf"/>
</dbReference>
<dbReference type="InterPro" id="IPR019734">
    <property type="entry name" value="TPR_rpt"/>
</dbReference>
<dbReference type="PANTHER" id="PTHR44835:SF1">
    <property type="entry name" value="PROTEIN O-GLCNAC TRANSFERASE"/>
    <property type="match status" value="1"/>
</dbReference>
<dbReference type="PANTHER" id="PTHR44835">
    <property type="entry name" value="UDP-N-ACETYLGLUCOSAMINE--PEPTIDE N-ACETYLGLUCOSAMINYLTRANSFERASE SPINDLY-RELATED"/>
    <property type="match status" value="1"/>
</dbReference>
<dbReference type="Pfam" id="PF13844">
    <property type="entry name" value="Glyco_transf_41"/>
    <property type="match status" value="2"/>
</dbReference>
<dbReference type="Pfam" id="PF00515">
    <property type="entry name" value="TPR_1"/>
    <property type="match status" value="4"/>
</dbReference>
<dbReference type="Pfam" id="PF13432">
    <property type="entry name" value="TPR_16"/>
    <property type="match status" value="1"/>
</dbReference>
<dbReference type="Pfam" id="PF13181">
    <property type="entry name" value="TPR_8"/>
    <property type="match status" value="1"/>
</dbReference>
<dbReference type="SMART" id="SM00671">
    <property type="entry name" value="SEL1"/>
    <property type="match status" value="5"/>
</dbReference>
<dbReference type="SMART" id="SM00028">
    <property type="entry name" value="TPR"/>
    <property type="match status" value="11"/>
</dbReference>
<dbReference type="SUPFAM" id="SSF48452">
    <property type="entry name" value="TPR-like"/>
    <property type="match status" value="3"/>
</dbReference>
<dbReference type="PROSITE" id="PS50005">
    <property type="entry name" value="TPR"/>
    <property type="match status" value="10"/>
</dbReference>
<dbReference type="PROSITE" id="PS50293">
    <property type="entry name" value="TPR_REGION"/>
    <property type="match status" value="1"/>
</dbReference>
<evidence type="ECO:0000250" key="1"/>
<evidence type="ECO:0000250" key="2">
    <source>
        <dbReference type="UniProtKB" id="Q96301"/>
    </source>
</evidence>
<evidence type="ECO:0000256" key="3">
    <source>
        <dbReference type="SAM" id="MobiDB-lite"/>
    </source>
</evidence>
<evidence type="ECO:0000269" key="4">
    <source>
    </source>
</evidence>
<evidence type="ECO:0000305" key="5"/>
<protein>
    <recommendedName>
        <fullName>Probable UDP-N-acetylglucosamine--peptide N-acetylglucosaminyltransferase SPINDLY</fullName>
        <ecNumber evidence="2">2.4.1.255</ecNumber>
    </recommendedName>
    <alternativeName>
        <fullName>PhSPY</fullName>
    </alternativeName>
</protein>
<organism>
    <name type="scientific">Petunia hybrida</name>
    <name type="common">Petunia</name>
    <dbReference type="NCBI Taxonomy" id="4102"/>
    <lineage>
        <taxon>Eukaryota</taxon>
        <taxon>Viridiplantae</taxon>
        <taxon>Streptophyta</taxon>
        <taxon>Embryophyta</taxon>
        <taxon>Tracheophyta</taxon>
        <taxon>Spermatophyta</taxon>
        <taxon>Magnoliopsida</taxon>
        <taxon>eudicotyledons</taxon>
        <taxon>Gunneridae</taxon>
        <taxon>Pentapetalae</taxon>
        <taxon>asterids</taxon>
        <taxon>lamiids</taxon>
        <taxon>Solanales</taxon>
        <taxon>Solanaceae</taxon>
        <taxon>Petunioideae</taxon>
        <taxon>Petunia</taxon>
    </lineage>
</organism>
<gene>
    <name type="primary">SPY</name>
</gene>
<name>SPY_PETHY</name>
<proteinExistence type="evidence at transcript level"/>
<keyword id="KW-0939">Gibberellin signaling pathway</keyword>
<keyword id="KW-0328">Glycosyltransferase</keyword>
<keyword id="KW-0539">Nucleus</keyword>
<keyword id="KW-0677">Repeat</keyword>
<keyword id="KW-0802">TPR repeat</keyword>
<keyword id="KW-0808">Transferase</keyword>
<sequence length="932" mass="103940">MAWTEKDVENGKESDSLGNNGFLKGVQSSSDSKGSPVRISPVKKSFEGKDAITYANILRSRNKFVDALAIYESVLQKDSGSIESLIGKGICLQMQNMGRLAFESFAEAIKLDPQNACALTHCGILYKDEGRLVEAAESYQKALKADPSYKPAAECLAIVLTDIGTSLKLAGNSQEGIQKYYEAIKIDSHYAPAYYNLGVVYSEMMQYDMALNCYEKAAIERPMYAEAYCNMGVIYKNRGDLESAIACYERCLAVSPNFEIAKNNMAIALTDLGTKVKLEGDINQGVAYYKKALYYNWHYADAMYNLGVAYGEMLKFDMAIVFYELAFHFNPHCAEACNNLGVIYKDRDNLDKAVECYQMALTIKPNFSQSLNNLGVVYTVQGKMDAAASMIEKAIIANPTYAEAYNNLGVLYRDAGNISLAIEAYEQCLKIDPDSRNAGQNRLLAMNYINEGSDDKLYEAHRDWGWRFMRLYQQYNSWDNSKDPERQLVIGYVSPDYFTHSVSYFIEAPLAYHDYANYKVVIYSAVVKADAKTNRFRDKVLKKGGVWRDIYGIDEKKVSSMIREDKVDIMIELTGHTANNKLGMMACRPAPVQVTWIGYPNTTGLPTIDYRITDSMADPPSTKQKHVEELVRLPDSFLCYTPSPEAGPVSPAPALTNGFVTFGSFNNLAKITPKVLQVWARILCAVPHSRLIVKCKPFGCDSVRQRFLSILEQLGLEPQRVDLVPLILLNHDHMQAYSLMDISLDTFPYAGTTTTCESLYMGVPCVTMGGSVHAHNVGVSLLKTVGLRKLVARNEDEYVELAIQLASDVTSLSNLRMSLRELMAKSPLCDGAQFTQNLESTYRSMWRRYCDGDVPSLRRMELLQQQQQTLAELVVPEESPVSPIEKTRISASKDGPIKENGFTVSPALVYNSSTIEENGVQLNQAGNPGKQS</sequence>